<reference key="1">
    <citation type="journal article" date="2008" name="Genome Res.">
        <title>Comparative genome analysis of Salmonella enteritidis PT4 and Salmonella gallinarum 287/91 provides insights into evolutionary and host adaptation pathways.</title>
        <authorList>
            <person name="Thomson N.R."/>
            <person name="Clayton D.J."/>
            <person name="Windhorst D."/>
            <person name="Vernikos G."/>
            <person name="Davidson S."/>
            <person name="Churcher C."/>
            <person name="Quail M.A."/>
            <person name="Stevens M."/>
            <person name="Jones M.A."/>
            <person name="Watson M."/>
            <person name="Barron A."/>
            <person name="Layton A."/>
            <person name="Pickard D."/>
            <person name="Kingsley R.A."/>
            <person name="Bignell A."/>
            <person name="Clark L."/>
            <person name="Harris B."/>
            <person name="Ormond D."/>
            <person name="Abdellah Z."/>
            <person name="Brooks K."/>
            <person name="Cherevach I."/>
            <person name="Chillingworth T."/>
            <person name="Woodward J."/>
            <person name="Norberczak H."/>
            <person name="Lord A."/>
            <person name="Arrowsmith C."/>
            <person name="Jagels K."/>
            <person name="Moule S."/>
            <person name="Mungall K."/>
            <person name="Saunders M."/>
            <person name="Whitehead S."/>
            <person name="Chabalgoity J.A."/>
            <person name="Maskell D."/>
            <person name="Humphreys T."/>
            <person name="Roberts M."/>
            <person name="Barrow P.A."/>
            <person name="Dougan G."/>
            <person name="Parkhill J."/>
        </authorList>
    </citation>
    <scope>NUCLEOTIDE SEQUENCE [LARGE SCALE GENOMIC DNA]</scope>
    <source>
        <strain>P125109</strain>
    </source>
</reference>
<keyword id="KW-0030">Aminoacyl-tRNA synthetase</keyword>
<keyword id="KW-0067">ATP-binding</keyword>
<keyword id="KW-0963">Cytoplasm</keyword>
<keyword id="KW-0436">Ligase</keyword>
<keyword id="KW-0479">Metal-binding</keyword>
<keyword id="KW-0547">Nucleotide-binding</keyword>
<keyword id="KW-0648">Protein biosynthesis</keyword>
<keyword id="KW-0862">Zinc</keyword>
<protein>
    <recommendedName>
        <fullName evidence="1">Glutamate--tRNA ligase</fullName>
        <ecNumber evidence="1">6.1.1.17</ecNumber>
    </recommendedName>
    <alternativeName>
        <fullName evidence="1">Glutamyl-tRNA synthetase</fullName>
        <shortName evidence="1">GluRS</shortName>
    </alternativeName>
</protein>
<gene>
    <name evidence="1" type="primary">gltX</name>
    <name type="ordered locus">SEN2399</name>
</gene>
<dbReference type="EC" id="6.1.1.17" evidence="1"/>
<dbReference type="EMBL" id="AM933172">
    <property type="protein sequence ID" value="CAR33985.1"/>
    <property type="molecule type" value="Genomic_DNA"/>
</dbReference>
<dbReference type="RefSeq" id="WP_000695626.1">
    <property type="nucleotide sequence ID" value="NC_011294.1"/>
</dbReference>
<dbReference type="SMR" id="B5R3U6"/>
<dbReference type="KEGG" id="set:SEN2399"/>
<dbReference type="HOGENOM" id="CLU_015768_6_0_6"/>
<dbReference type="Proteomes" id="UP000000613">
    <property type="component" value="Chromosome"/>
</dbReference>
<dbReference type="GO" id="GO:0005829">
    <property type="term" value="C:cytosol"/>
    <property type="evidence" value="ECO:0007669"/>
    <property type="project" value="TreeGrafter"/>
</dbReference>
<dbReference type="GO" id="GO:0005524">
    <property type="term" value="F:ATP binding"/>
    <property type="evidence" value="ECO:0007669"/>
    <property type="project" value="UniProtKB-UniRule"/>
</dbReference>
<dbReference type="GO" id="GO:0004818">
    <property type="term" value="F:glutamate-tRNA ligase activity"/>
    <property type="evidence" value="ECO:0007669"/>
    <property type="project" value="UniProtKB-UniRule"/>
</dbReference>
<dbReference type="GO" id="GO:0000049">
    <property type="term" value="F:tRNA binding"/>
    <property type="evidence" value="ECO:0007669"/>
    <property type="project" value="InterPro"/>
</dbReference>
<dbReference type="GO" id="GO:0008270">
    <property type="term" value="F:zinc ion binding"/>
    <property type="evidence" value="ECO:0007669"/>
    <property type="project" value="UniProtKB-UniRule"/>
</dbReference>
<dbReference type="GO" id="GO:0006424">
    <property type="term" value="P:glutamyl-tRNA aminoacylation"/>
    <property type="evidence" value="ECO:0007669"/>
    <property type="project" value="UniProtKB-UniRule"/>
</dbReference>
<dbReference type="CDD" id="cd00808">
    <property type="entry name" value="GluRS_core"/>
    <property type="match status" value="1"/>
</dbReference>
<dbReference type="FunFam" id="1.10.10.350:FF:000001">
    <property type="entry name" value="Glutamate--tRNA ligase"/>
    <property type="match status" value="1"/>
</dbReference>
<dbReference type="FunFam" id="3.40.50.620:FF:000007">
    <property type="entry name" value="Glutamate--tRNA ligase"/>
    <property type="match status" value="1"/>
</dbReference>
<dbReference type="Gene3D" id="1.10.10.350">
    <property type="match status" value="1"/>
</dbReference>
<dbReference type="Gene3D" id="3.40.50.620">
    <property type="entry name" value="HUPs"/>
    <property type="match status" value="1"/>
</dbReference>
<dbReference type="HAMAP" id="MF_00022">
    <property type="entry name" value="Glu_tRNA_synth_type1"/>
    <property type="match status" value="1"/>
</dbReference>
<dbReference type="InterPro" id="IPR045462">
    <property type="entry name" value="aa-tRNA-synth_I_cd-bd"/>
</dbReference>
<dbReference type="InterPro" id="IPR020751">
    <property type="entry name" value="aa-tRNA-synth_I_codon-bd_sub2"/>
</dbReference>
<dbReference type="InterPro" id="IPR001412">
    <property type="entry name" value="aa-tRNA-synth_I_CS"/>
</dbReference>
<dbReference type="InterPro" id="IPR008925">
    <property type="entry name" value="aa_tRNA-synth_I_cd-bd_sf"/>
</dbReference>
<dbReference type="InterPro" id="IPR004527">
    <property type="entry name" value="Glu-tRNA-ligase_bac/mito"/>
</dbReference>
<dbReference type="InterPro" id="IPR000924">
    <property type="entry name" value="Glu/Gln-tRNA-synth"/>
</dbReference>
<dbReference type="InterPro" id="IPR020058">
    <property type="entry name" value="Glu/Gln-tRNA-synth_Ib_cat-dom"/>
</dbReference>
<dbReference type="InterPro" id="IPR049940">
    <property type="entry name" value="GluQ/Sye"/>
</dbReference>
<dbReference type="InterPro" id="IPR033910">
    <property type="entry name" value="GluRS_core"/>
</dbReference>
<dbReference type="InterPro" id="IPR014729">
    <property type="entry name" value="Rossmann-like_a/b/a_fold"/>
</dbReference>
<dbReference type="NCBIfam" id="TIGR00464">
    <property type="entry name" value="gltX_bact"/>
    <property type="match status" value="1"/>
</dbReference>
<dbReference type="PANTHER" id="PTHR43311">
    <property type="entry name" value="GLUTAMATE--TRNA LIGASE"/>
    <property type="match status" value="1"/>
</dbReference>
<dbReference type="PANTHER" id="PTHR43311:SF2">
    <property type="entry name" value="GLUTAMATE--TRNA LIGASE, MITOCHONDRIAL-RELATED"/>
    <property type="match status" value="1"/>
</dbReference>
<dbReference type="Pfam" id="PF19269">
    <property type="entry name" value="Anticodon_2"/>
    <property type="match status" value="1"/>
</dbReference>
<dbReference type="Pfam" id="PF00749">
    <property type="entry name" value="tRNA-synt_1c"/>
    <property type="match status" value="1"/>
</dbReference>
<dbReference type="PRINTS" id="PR00987">
    <property type="entry name" value="TRNASYNTHGLU"/>
</dbReference>
<dbReference type="SUPFAM" id="SSF48163">
    <property type="entry name" value="An anticodon-binding domain of class I aminoacyl-tRNA synthetases"/>
    <property type="match status" value="1"/>
</dbReference>
<dbReference type="SUPFAM" id="SSF52374">
    <property type="entry name" value="Nucleotidylyl transferase"/>
    <property type="match status" value="1"/>
</dbReference>
<dbReference type="PROSITE" id="PS00178">
    <property type="entry name" value="AA_TRNA_LIGASE_I"/>
    <property type="match status" value="1"/>
</dbReference>
<sequence length="471" mass="53674">MKIKTRFAPSPTGYLHVGGARTALYSWLFARHHGGEFVLRIEDTDLERSTPEAIEAIMDGMNWLNLEWDEGPYFQTKRFDRYNAVIDEMLEAGTAYKCYCSKERLEQLREEQMAKGEKPRYDGRCRHSYEHHADDEPCVVRFANPQDGSVIFDDQIRGPIEFSNQELDDLIIRRTDGSPTYNFCVVVDDWDMEITHVIRGEDHINNTPRQINILKALNAPVPMYAHVSMINGDDGKKLSKRHGAVSVMQYRDDGYLPEALLNYLVRLGWSSGDQEIFTREEMIKLFSLGAVSKSASAFNTDKLLWLNHHYINTLAPEYVATHLQWHIEQENIDTRNGPQLAELVKLLGERCKTLKEMAQSCRYFYEDFSEFDADAAKKHLRPVARQPLEVVRDKLSAITDWSAENVHHAIQATADELEVGMGKVGMPLRVAVTGAGQSPALDVTVHAIGKTRSIERINKALGFIAERESQQ</sequence>
<proteinExistence type="inferred from homology"/>
<name>SYE_SALEP</name>
<organism>
    <name type="scientific">Salmonella enteritidis PT4 (strain P125109)</name>
    <dbReference type="NCBI Taxonomy" id="550537"/>
    <lineage>
        <taxon>Bacteria</taxon>
        <taxon>Pseudomonadati</taxon>
        <taxon>Pseudomonadota</taxon>
        <taxon>Gammaproteobacteria</taxon>
        <taxon>Enterobacterales</taxon>
        <taxon>Enterobacteriaceae</taxon>
        <taxon>Salmonella</taxon>
    </lineage>
</organism>
<comment type="function">
    <text evidence="1">Catalyzes the attachment of glutamate to tRNA(Glu) in a two-step reaction: glutamate is first activated by ATP to form Glu-AMP and then transferred to the acceptor end of tRNA(Glu).</text>
</comment>
<comment type="catalytic activity">
    <reaction evidence="1">
        <text>tRNA(Glu) + L-glutamate + ATP = L-glutamyl-tRNA(Glu) + AMP + diphosphate</text>
        <dbReference type="Rhea" id="RHEA:23540"/>
        <dbReference type="Rhea" id="RHEA-COMP:9663"/>
        <dbReference type="Rhea" id="RHEA-COMP:9680"/>
        <dbReference type="ChEBI" id="CHEBI:29985"/>
        <dbReference type="ChEBI" id="CHEBI:30616"/>
        <dbReference type="ChEBI" id="CHEBI:33019"/>
        <dbReference type="ChEBI" id="CHEBI:78442"/>
        <dbReference type="ChEBI" id="CHEBI:78520"/>
        <dbReference type="ChEBI" id="CHEBI:456215"/>
        <dbReference type="EC" id="6.1.1.17"/>
    </reaction>
</comment>
<comment type="cofactor">
    <cofactor evidence="1">
        <name>Zn(2+)</name>
        <dbReference type="ChEBI" id="CHEBI:29105"/>
    </cofactor>
    <text evidence="1">Binds 1 zinc ion per subunit.</text>
</comment>
<comment type="subunit">
    <text evidence="1">Monomer.</text>
</comment>
<comment type="subcellular location">
    <subcellularLocation>
        <location evidence="1">Cytoplasm</location>
    </subcellularLocation>
</comment>
<comment type="similarity">
    <text evidence="1">Belongs to the class-I aminoacyl-tRNA synthetase family. Glutamate--tRNA ligase type 1 subfamily.</text>
</comment>
<feature type="chain" id="PRO_1000090102" description="Glutamate--tRNA ligase">
    <location>
        <begin position="1"/>
        <end position="471"/>
    </location>
</feature>
<feature type="short sequence motif" description="'HIGH' region" evidence="1">
    <location>
        <begin position="9"/>
        <end position="19"/>
    </location>
</feature>
<feature type="short sequence motif" description="'KMSKS' region" evidence="1">
    <location>
        <begin position="237"/>
        <end position="241"/>
    </location>
</feature>
<feature type="binding site" evidence="1">
    <location>
        <position position="98"/>
    </location>
    <ligand>
        <name>Zn(2+)</name>
        <dbReference type="ChEBI" id="CHEBI:29105"/>
    </ligand>
</feature>
<feature type="binding site" evidence="1">
    <location>
        <position position="100"/>
    </location>
    <ligand>
        <name>Zn(2+)</name>
        <dbReference type="ChEBI" id="CHEBI:29105"/>
    </ligand>
</feature>
<feature type="binding site" evidence="1">
    <location>
        <position position="125"/>
    </location>
    <ligand>
        <name>Zn(2+)</name>
        <dbReference type="ChEBI" id="CHEBI:29105"/>
    </ligand>
</feature>
<feature type="binding site" evidence="1">
    <location>
        <position position="127"/>
    </location>
    <ligand>
        <name>Zn(2+)</name>
        <dbReference type="ChEBI" id="CHEBI:29105"/>
    </ligand>
</feature>
<feature type="binding site" evidence="1">
    <location>
        <position position="240"/>
    </location>
    <ligand>
        <name>ATP</name>
        <dbReference type="ChEBI" id="CHEBI:30616"/>
    </ligand>
</feature>
<evidence type="ECO:0000255" key="1">
    <source>
        <dbReference type="HAMAP-Rule" id="MF_00022"/>
    </source>
</evidence>
<accession>B5R3U6</accession>